<evidence type="ECO:0000255" key="1">
    <source>
        <dbReference type="PROSITE-ProRule" id="PRU00477"/>
    </source>
</evidence>
<evidence type="ECO:0000305" key="2"/>
<evidence type="ECO:0007829" key="3">
    <source>
        <dbReference type="PDB" id="4P0D"/>
    </source>
</evidence>
<feature type="signal peptide">
    <location>
        <begin position="1"/>
        <end position="22"/>
    </location>
</feature>
<feature type="chain" id="PRO_0000005671" description="Trypsin-resistant surface T6 protein">
    <location>
        <begin position="23"/>
        <end position="507"/>
    </location>
</feature>
<feature type="propeptide" id="PRO_0000005672" description="Removed by sortase" evidence="1">
    <location>
        <begin position="508"/>
        <end position="537"/>
    </location>
</feature>
<feature type="region of interest" description="Hydrophilic">
    <location>
        <begin position="310"/>
        <end position="330"/>
    </location>
</feature>
<feature type="short sequence motif" description="LPXTG sorting signal" evidence="1">
    <location>
        <begin position="504"/>
        <end position="508"/>
    </location>
</feature>
<feature type="modified residue" description="Pentaglycyl murein peptidoglycan amidated threonine" evidence="1">
    <location>
        <position position="507"/>
    </location>
</feature>
<feature type="sequence conflict" description="In Ref. 1 and 2." evidence="2" ref="1 2">
    <original>K</original>
    <variation>R</variation>
    <location>
        <position position="318"/>
    </location>
</feature>
<feature type="strand" evidence="3">
    <location>
        <begin position="26"/>
        <end position="32"/>
    </location>
</feature>
<feature type="strand" evidence="3">
    <location>
        <begin position="39"/>
        <end position="50"/>
    </location>
</feature>
<feature type="strand" evidence="3">
    <location>
        <begin position="56"/>
        <end position="62"/>
    </location>
</feature>
<feature type="helix" evidence="3">
    <location>
        <begin position="75"/>
        <end position="87"/>
    </location>
</feature>
<feature type="strand" evidence="3">
    <location>
        <begin position="88"/>
        <end position="90"/>
    </location>
</feature>
<feature type="strand" evidence="3">
    <location>
        <begin position="93"/>
        <end position="98"/>
    </location>
</feature>
<feature type="strand" evidence="3">
    <location>
        <begin position="104"/>
        <end position="120"/>
    </location>
</feature>
<feature type="strand" evidence="3">
    <location>
        <begin position="131"/>
        <end position="136"/>
    </location>
</feature>
<feature type="strand" evidence="3">
    <location>
        <begin position="158"/>
        <end position="161"/>
    </location>
</feature>
<feature type="strand" evidence="3">
    <location>
        <begin position="168"/>
        <end position="175"/>
    </location>
</feature>
<feature type="strand" evidence="3">
    <location>
        <begin position="177"/>
        <end position="179"/>
    </location>
</feature>
<feature type="strand" evidence="3">
    <location>
        <begin position="182"/>
        <end position="184"/>
    </location>
</feature>
<feature type="strand" evidence="3">
    <location>
        <begin position="190"/>
        <end position="198"/>
    </location>
</feature>
<feature type="strand" evidence="3">
    <location>
        <begin position="211"/>
        <end position="216"/>
    </location>
</feature>
<feature type="strand" evidence="3">
    <location>
        <begin position="221"/>
        <end position="232"/>
    </location>
</feature>
<feature type="strand" evidence="3">
    <location>
        <begin position="244"/>
        <end position="247"/>
    </location>
</feature>
<feature type="strand" evidence="3">
    <location>
        <begin position="250"/>
        <end position="257"/>
    </location>
</feature>
<feature type="strand" evidence="3">
    <location>
        <begin position="259"/>
        <end position="266"/>
    </location>
</feature>
<feature type="helix" evidence="3">
    <location>
        <begin position="268"/>
        <end position="271"/>
    </location>
</feature>
<feature type="strand" evidence="3">
    <location>
        <begin position="277"/>
        <end position="284"/>
    </location>
</feature>
<feature type="strand" evidence="3">
    <location>
        <begin position="299"/>
        <end position="306"/>
    </location>
</feature>
<feature type="strand" evidence="3">
    <location>
        <begin position="316"/>
        <end position="318"/>
    </location>
</feature>
<feature type="strand" evidence="3">
    <location>
        <begin position="326"/>
        <end position="331"/>
    </location>
</feature>
<feature type="strand" evidence="3">
    <location>
        <begin position="334"/>
        <end position="336"/>
    </location>
</feature>
<feature type="strand" evidence="3">
    <location>
        <begin position="338"/>
        <end position="346"/>
    </location>
</feature>
<feature type="turn" evidence="3">
    <location>
        <begin position="347"/>
        <end position="349"/>
    </location>
</feature>
<feature type="strand" evidence="3">
    <location>
        <begin position="357"/>
        <end position="362"/>
    </location>
</feature>
<feature type="strand" evidence="3">
    <location>
        <begin position="367"/>
        <end position="372"/>
    </location>
</feature>
<feature type="strand" evidence="3">
    <location>
        <begin position="377"/>
        <end position="380"/>
    </location>
</feature>
<feature type="strand" evidence="3">
    <location>
        <begin position="386"/>
        <end position="395"/>
    </location>
</feature>
<feature type="strand" evidence="3">
    <location>
        <begin position="407"/>
        <end position="412"/>
    </location>
</feature>
<feature type="turn" evidence="3">
    <location>
        <begin position="413"/>
        <end position="415"/>
    </location>
</feature>
<feature type="strand" evidence="3">
    <location>
        <begin position="418"/>
        <end position="420"/>
    </location>
</feature>
<feature type="strand" evidence="3">
    <location>
        <begin position="428"/>
        <end position="431"/>
    </location>
</feature>
<feature type="helix" evidence="3">
    <location>
        <begin position="433"/>
        <end position="435"/>
    </location>
</feature>
<feature type="helix" evidence="3">
    <location>
        <begin position="437"/>
        <end position="439"/>
    </location>
</feature>
<feature type="strand" evidence="3">
    <location>
        <begin position="444"/>
        <end position="447"/>
    </location>
</feature>
<feature type="strand" evidence="3">
    <location>
        <begin position="450"/>
        <end position="453"/>
    </location>
</feature>
<feature type="helix" evidence="3">
    <location>
        <begin position="454"/>
        <end position="456"/>
    </location>
</feature>
<feature type="strand" evidence="3">
    <location>
        <begin position="464"/>
        <end position="470"/>
    </location>
</feature>
<feature type="strand" evidence="3">
    <location>
        <begin position="480"/>
        <end position="482"/>
    </location>
</feature>
<feature type="strand" evidence="3">
    <location>
        <begin position="487"/>
        <end position="491"/>
    </location>
</feature>
<feature type="strand" evidence="3">
    <location>
        <begin position="496"/>
        <end position="498"/>
    </location>
</feature>
<keyword id="KW-0002">3D-structure</keyword>
<keyword id="KW-0134">Cell wall</keyword>
<keyword id="KW-0572">Peptidoglycan-anchor</keyword>
<keyword id="KW-0964">Secreted</keyword>
<keyword id="KW-0732">Signal</keyword>
<sequence length="537" mass="57647">MLACLAILAVVGLGMTRVSALSKDDTAQLKITNIEGGPTVTLYKIGEGVYNTNGDSFINFKYAEGVSLTETGPTSQEITTIANGINTGKIKPFSTENVSISNGTATYNARGASVYIALLTGATDGRTYNPILLAASYNGEGNLVTKNIDSKSNYLYGQTSVAKSSLPSITKKVTGTIDDVNKKTTSLGSVLSYSLTFELPSYTKEAVNKTVYVSDNMSEGLTFNFNSLTVEWKGKMANITEDGSVMVENTKIGIAKEVNNGFNLSFIYDSLESISPNISYKAVVNNKAIVGEEGNPNKAEFFYSNNPTKGNTYDNLDKKPDKGNGITSKEDSKIVYTYQIAFRKVDSVSKTPLIGAIFGVYDTSNKLIDIVTTNKNGYAISTQVSSGKYKIKELKAPKGYSLNTETYEITANWVTATVKTSANSKSTTYTSDKNKATDNSEQVGWLKNGIFYSIDSRPTGNDVKEAYIESTKALTDGTTFSKSNEGSGTVLLETDIPNTKLGELPSTGSIGTYLFKAIGSAAMIGAIGIYIVKRRKA</sequence>
<gene>
    <name type="primary">tee6</name>
    <name type="ordered locus">M6_Spy0160</name>
</gene>
<dbReference type="EMBL" id="M32978">
    <property type="protein sequence ID" value="AAA27019.1"/>
    <property type="molecule type" value="Genomic_DNA"/>
</dbReference>
<dbReference type="EMBL" id="AY049087">
    <property type="protein sequence ID" value="AAL11467.1"/>
    <property type="molecule type" value="Genomic_DNA"/>
</dbReference>
<dbReference type="EMBL" id="CP000003">
    <property type="protein sequence ID" value="AAT86295.1"/>
    <property type="status" value="ALT_INIT"/>
    <property type="molecule type" value="Genomic_DNA"/>
</dbReference>
<dbReference type="PIR" id="A35400">
    <property type="entry name" value="A35400"/>
</dbReference>
<dbReference type="PDB" id="4P0D">
    <property type="method" value="X-ray"/>
    <property type="resolution" value="1.90 A"/>
    <property type="chains" value="A=21-508"/>
</dbReference>
<dbReference type="PDBsum" id="4P0D"/>
<dbReference type="SMR" id="P18481"/>
<dbReference type="KEGG" id="spa:M6_Spy0160"/>
<dbReference type="HOGENOM" id="CLU_028873_3_0_9"/>
<dbReference type="EvolutionaryTrace" id="P18481"/>
<dbReference type="Proteomes" id="UP000001167">
    <property type="component" value="Chromosome"/>
</dbReference>
<dbReference type="GO" id="GO:0005576">
    <property type="term" value="C:extracellular region"/>
    <property type="evidence" value="ECO:0007669"/>
    <property type="project" value="UniProtKB-KW"/>
</dbReference>
<dbReference type="Gene3D" id="2.60.40.740">
    <property type="match status" value="1"/>
</dbReference>
<dbReference type="Gene3D" id="2.60.40.10">
    <property type="entry name" value="Immunoglobulins"/>
    <property type="match status" value="1"/>
</dbReference>
<dbReference type="InterPro" id="IPR032334">
    <property type="entry name" value="GramPos_pilinBB"/>
</dbReference>
<dbReference type="InterPro" id="IPR013783">
    <property type="entry name" value="Ig-like_fold"/>
</dbReference>
<dbReference type="InterPro" id="IPR019931">
    <property type="entry name" value="LPXTG_anchor"/>
</dbReference>
<dbReference type="InterPro" id="IPR041033">
    <property type="entry name" value="SpaA_PFL_dom_1"/>
</dbReference>
<dbReference type="InterPro" id="IPR041184">
    <property type="entry name" value="T6_Ig-like"/>
</dbReference>
<dbReference type="NCBIfam" id="TIGR01167">
    <property type="entry name" value="LPXTG_anchor"/>
    <property type="match status" value="1"/>
</dbReference>
<dbReference type="Pfam" id="PF00746">
    <property type="entry name" value="Gram_pos_anchor"/>
    <property type="match status" value="1"/>
</dbReference>
<dbReference type="Pfam" id="PF16569">
    <property type="entry name" value="GramPos_pilinBB"/>
    <property type="match status" value="1"/>
</dbReference>
<dbReference type="Pfam" id="PF17802">
    <property type="entry name" value="SpaA"/>
    <property type="match status" value="1"/>
</dbReference>
<dbReference type="Pfam" id="PF18002">
    <property type="entry name" value="T6_Ig_like"/>
    <property type="match status" value="1"/>
</dbReference>
<dbReference type="SUPFAM" id="SSF49478">
    <property type="entry name" value="Cna protein B-type domain"/>
    <property type="match status" value="1"/>
</dbReference>
<dbReference type="PROSITE" id="PS50847">
    <property type="entry name" value="GRAM_POS_ANCHORING"/>
    <property type="match status" value="1"/>
</dbReference>
<organism>
    <name type="scientific">Streptococcus pyogenes serotype M6 (strain ATCC BAA-946 / MGAS10394)</name>
    <dbReference type="NCBI Taxonomy" id="286636"/>
    <lineage>
        <taxon>Bacteria</taxon>
        <taxon>Bacillati</taxon>
        <taxon>Bacillota</taxon>
        <taxon>Bacilli</taxon>
        <taxon>Lactobacillales</taxon>
        <taxon>Streptococcaceae</taxon>
        <taxon>Streptococcus</taxon>
    </lineage>
</organism>
<reference key="1">
    <citation type="journal article" date="1990" name="J. Bacteriol.">
        <title>Sequence and structural characteristics of the trypsin-resistant T6 surface protein of group A streptococci.</title>
        <authorList>
            <person name="Schneewind O."/>
            <person name="Jones K.F."/>
            <person name="Fischetti V.A."/>
        </authorList>
    </citation>
    <scope>NUCLEOTIDE SEQUENCE [GENOMIC DNA]</scope>
    <source>
        <strain>D471 / Serotype M6</strain>
    </source>
</reference>
<reference key="2">
    <citation type="journal article" date="2002" name="Infect. Immun.">
        <title>Genomic localization of a T serotype locus to a recombinatorial zone encoding extracellular matrix-binding proteins in Streptococcus pyogenes.</title>
        <authorList>
            <person name="Bessen D.E."/>
            <person name="Kalia A."/>
        </authorList>
    </citation>
    <scope>NUCLEOTIDE SEQUENCE [GENOMIC DNA]</scope>
</reference>
<reference key="3">
    <citation type="journal article" date="2004" name="J. Infect. Dis.">
        <title>Progress toward characterization of the group A Streptococcus metagenome: complete genome sequence of a macrolide-resistant serotype M6 strain.</title>
        <authorList>
            <person name="Banks D.J."/>
            <person name="Porcella S.F."/>
            <person name="Barbian K.D."/>
            <person name="Beres S.B."/>
            <person name="Philips L.E."/>
            <person name="Voyich J.M."/>
            <person name="DeLeo F.R."/>
            <person name="Martin J.M."/>
            <person name="Somerville G.A."/>
            <person name="Musser J.M."/>
        </authorList>
    </citation>
    <scope>NUCLEOTIDE SEQUENCE [LARGE SCALE GENOMIC DNA]</scope>
    <source>
        <strain>ATCC BAA-946 / MGAS10394</strain>
    </source>
</reference>
<name>TEE6_STRP6</name>
<protein>
    <recommendedName>
        <fullName>Trypsin-resistant surface T6 protein</fullName>
    </recommendedName>
    <alternativeName>
        <fullName>T6 antigen</fullName>
    </alternativeName>
</protein>
<proteinExistence type="evidence at protein level"/>
<comment type="subcellular location">
    <subcellularLocation>
        <location evidence="1">Secreted</location>
        <location evidence="1">Cell wall</location>
        <topology evidence="1">Peptidoglycan-anchor</topology>
    </subcellularLocation>
</comment>
<comment type="miscellaneous">
    <text>More than 25 serologically different T antigens are found to be expressed independently of M protein, but certain T proteins occur only in association with specific M serotypes (i.e. T6 protein is always found on M6 streptococcal strains).</text>
</comment>
<comment type="miscellaneous">
    <text>The T protein is exposed on the cell surface when fibrillar M protein is enzymatically removed.</text>
</comment>
<comment type="sequence caution" evidence="2">
    <conflict type="erroneous initiation">
        <sequence resource="EMBL-CDS" id="AAT86295"/>
    </conflict>
</comment>
<accession>P18481</accession>
<accession>Q5XE68</accession>